<comment type="function">
    <text evidence="1">Component of the Mediator complex, a coactivator involved in the regulated transcription of nearly all RNA polymerase II-dependent genes. Mediator functions as a bridge to convey information from gene-specific regulatory proteins to the basal RNA polymerase II transcription machinery. The Mediator complex, having a compact conformation in its free form, is recruited to promoters by direct interactions with regulatory proteins and serves for the assembly of a functional preinitiation complex with RNA polymerase II and the general transcription factors (By similarity).</text>
</comment>
<comment type="subunit">
    <text evidence="4 5">Component of the Mediator complex.</text>
</comment>
<comment type="interaction">
    <interactant intactId="EBI-1386214">
        <id>Q9LZ00</id>
    </interactant>
    <interactant intactId="EBI-1386224">
        <id>Q8RWA2</id>
        <label>MED9</label>
    </interactant>
    <organismsDiffer>false</organismsDiffer>
    <experiments>5</experiments>
</comment>
<comment type="subcellular location">
    <subcellularLocation>
        <location evidence="6">Nucleus</location>
    </subcellularLocation>
</comment>
<comment type="similarity">
    <text evidence="6">Belongs to the Mediator complex subunit 4 family.</text>
</comment>
<protein>
    <recommendedName>
        <fullName>Mediator of RNA polymerase II transcription subunit 4</fullName>
    </recommendedName>
</protein>
<keyword id="KW-0175">Coiled coil</keyword>
<keyword id="KW-0539">Nucleus</keyword>
<keyword id="KW-1185">Reference proteome</keyword>
<keyword id="KW-0804">Transcription</keyword>
<keyword id="KW-0805">Transcription regulation</keyword>
<evidence type="ECO:0000250" key="1"/>
<evidence type="ECO:0000255" key="2"/>
<evidence type="ECO:0000256" key="3">
    <source>
        <dbReference type="SAM" id="MobiDB-lite"/>
    </source>
</evidence>
<evidence type="ECO:0000269" key="4">
    <source>
    </source>
</evidence>
<evidence type="ECO:0000269" key="5">
    <source>
    </source>
</evidence>
<evidence type="ECO:0000305" key="6"/>
<sequence>MLQHQIVQSPARLGLTGPGSPSVQNPTPTRHGHPTSSSSSQSQHQQIQQQPNLLPSSTVAAASSASASAAVSSSALLSLLPPLPRAQALLQQMAVLTSKLFDVSPNRAIWLSAFRGSLPSFLSSHSLPPPPPLENPSPSSTKEILSQFNSLQTQLFEAVTELQEILDLQDAKQKVAREIKSKDSSLLAFANKLKDAERVLDMLVDDYSDYRKPKRSKIEEDDEDNDNESSSSSTTVSSQLKLKDILAYAHKISYTTFAPPEFGAGQAPLRGALPPAPQDEQMRASQLYTFADLDIGLPKTVENMEKKVEALIEPPPPPEAMDISAIHNLLPPNIAVPSGWKPGMPVELPRDLPLPPPGWKPGDPVVLPPLESIAAPRAEDHQHMRPSQGLHRPPDVIQVRAVQLDILEDDDSSDYSSDDASSDDED</sequence>
<proteinExistence type="evidence at protein level"/>
<feature type="chain" id="PRO_0000418110" description="Mediator of RNA polymerase II transcription subunit 4">
    <location>
        <begin position="1"/>
        <end position="426"/>
    </location>
</feature>
<feature type="region of interest" description="Disordered" evidence="3">
    <location>
        <begin position="1"/>
        <end position="56"/>
    </location>
</feature>
<feature type="region of interest" description="Disordered" evidence="3">
    <location>
        <begin position="214"/>
        <end position="236"/>
    </location>
</feature>
<feature type="region of interest" description="Disordered" evidence="3">
    <location>
        <begin position="373"/>
        <end position="426"/>
    </location>
</feature>
<feature type="coiled-coil region" evidence="2">
    <location>
        <begin position="160"/>
        <end position="212"/>
    </location>
</feature>
<feature type="compositionally biased region" description="Polar residues" evidence="3">
    <location>
        <begin position="19"/>
        <end position="28"/>
    </location>
</feature>
<feature type="compositionally biased region" description="Low complexity" evidence="3">
    <location>
        <begin position="36"/>
        <end position="56"/>
    </location>
</feature>
<feature type="compositionally biased region" description="Acidic residues" evidence="3">
    <location>
        <begin position="406"/>
        <end position="426"/>
    </location>
</feature>
<feature type="sequence conflict" description="In Ref. 3; AAP40461." evidence="6" ref="3">
    <original>P</original>
    <variation>T</variation>
    <location>
        <position position="34"/>
    </location>
</feature>
<organism>
    <name type="scientific">Arabidopsis thaliana</name>
    <name type="common">Mouse-ear cress</name>
    <dbReference type="NCBI Taxonomy" id="3702"/>
    <lineage>
        <taxon>Eukaryota</taxon>
        <taxon>Viridiplantae</taxon>
        <taxon>Streptophyta</taxon>
        <taxon>Embryophyta</taxon>
        <taxon>Tracheophyta</taxon>
        <taxon>Spermatophyta</taxon>
        <taxon>Magnoliopsida</taxon>
        <taxon>eudicotyledons</taxon>
        <taxon>Gunneridae</taxon>
        <taxon>Pentapetalae</taxon>
        <taxon>rosids</taxon>
        <taxon>malvids</taxon>
        <taxon>Brassicales</taxon>
        <taxon>Brassicaceae</taxon>
        <taxon>Camelineae</taxon>
        <taxon>Arabidopsis</taxon>
    </lineage>
</organism>
<dbReference type="EMBL" id="AL162973">
    <property type="protein sequence ID" value="CAB86039.1"/>
    <property type="molecule type" value="Genomic_DNA"/>
</dbReference>
<dbReference type="EMBL" id="CP002688">
    <property type="protein sequence ID" value="AED90527.1"/>
    <property type="molecule type" value="Genomic_DNA"/>
</dbReference>
<dbReference type="EMBL" id="BT008646">
    <property type="protein sequence ID" value="AAP40461.1"/>
    <property type="molecule type" value="mRNA"/>
</dbReference>
<dbReference type="PIR" id="T48306">
    <property type="entry name" value="T48306"/>
</dbReference>
<dbReference type="RefSeq" id="NP_195905.1">
    <property type="nucleotide sequence ID" value="NM_120363.3"/>
</dbReference>
<dbReference type="SMR" id="Q9LZ00"/>
<dbReference type="BioGRID" id="17038">
    <property type="interactions" value="3"/>
</dbReference>
<dbReference type="FunCoup" id="Q9LZ00">
    <property type="interactions" value="1378"/>
</dbReference>
<dbReference type="IntAct" id="Q9LZ00">
    <property type="interactions" value="91"/>
</dbReference>
<dbReference type="STRING" id="3702.Q9LZ00"/>
<dbReference type="iPTMnet" id="Q9LZ00"/>
<dbReference type="PaxDb" id="3702-AT5G02850.1"/>
<dbReference type="ProteomicsDB" id="238944"/>
<dbReference type="EnsemblPlants" id="AT5G02850.1">
    <property type="protein sequence ID" value="AT5G02850.1"/>
    <property type="gene ID" value="AT5G02850"/>
</dbReference>
<dbReference type="GeneID" id="831762"/>
<dbReference type="Gramene" id="AT5G02850.1">
    <property type="protein sequence ID" value="AT5G02850.1"/>
    <property type="gene ID" value="AT5G02850"/>
</dbReference>
<dbReference type="KEGG" id="ath:AT5G02850"/>
<dbReference type="Araport" id="AT5G02850"/>
<dbReference type="TAIR" id="AT5G02850">
    <property type="gene designation" value="MED4"/>
</dbReference>
<dbReference type="eggNOG" id="ENOG502QQ6I">
    <property type="taxonomic scope" value="Eukaryota"/>
</dbReference>
<dbReference type="HOGENOM" id="CLU_057409_1_0_1"/>
<dbReference type="InParanoid" id="Q9LZ00"/>
<dbReference type="OMA" id="NPDMQDE"/>
<dbReference type="OrthoDB" id="1929813at2759"/>
<dbReference type="PhylomeDB" id="Q9LZ00"/>
<dbReference type="PRO" id="PR:Q9LZ00"/>
<dbReference type="Proteomes" id="UP000006548">
    <property type="component" value="Chromosome 5"/>
</dbReference>
<dbReference type="ExpressionAtlas" id="Q9LZ00">
    <property type="expression patterns" value="baseline and differential"/>
</dbReference>
<dbReference type="GO" id="GO:0016592">
    <property type="term" value="C:mediator complex"/>
    <property type="evidence" value="ECO:0000314"/>
    <property type="project" value="UniProtKB"/>
</dbReference>
<dbReference type="GO" id="GO:0003712">
    <property type="term" value="F:transcription coregulator activity"/>
    <property type="evidence" value="ECO:0007669"/>
    <property type="project" value="InterPro"/>
</dbReference>
<dbReference type="GO" id="GO:0006357">
    <property type="term" value="P:regulation of transcription by RNA polymerase II"/>
    <property type="evidence" value="ECO:0007669"/>
    <property type="project" value="InterPro"/>
</dbReference>
<dbReference type="InterPro" id="IPR019258">
    <property type="entry name" value="Mediator_Med4"/>
</dbReference>
<dbReference type="PANTHER" id="PTHR13208">
    <property type="entry name" value="MEDIATOR OF RNA POLYMERASE II TRANSCRIPTION SUBUNIT 4"/>
    <property type="match status" value="1"/>
</dbReference>
<dbReference type="PANTHER" id="PTHR13208:SF2">
    <property type="entry name" value="MEDIATOR OF RNA POLYMERASE II TRANSCRIPTION SUBUNIT 4"/>
    <property type="match status" value="1"/>
</dbReference>
<dbReference type="Pfam" id="PF10018">
    <property type="entry name" value="Med4"/>
    <property type="match status" value="1"/>
</dbReference>
<name>MED4_ARATH</name>
<reference key="1">
    <citation type="journal article" date="2000" name="Nature">
        <title>Sequence and analysis of chromosome 5 of the plant Arabidopsis thaliana.</title>
        <authorList>
            <person name="Tabata S."/>
            <person name="Kaneko T."/>
            <person name="Nakamura Y."/>
            <person name="Kotani H."/>
            <person name="Kato T."/>
            <person name="Asamizu E."/>
            <person name="Miyajima N."/>
            <person name="Sasamoto S."/>
            <person name="Kimura T."/>
            <person name="Hosouchi T."/>
            <person name="Kawashima K."/>
            <person name="Kohara M."/>
            <person name="Matsumoto M."/>
            <person name="Matsuno A."/>
            <person name="Muraki A."/>
            <person name="Nakayama S."/>
            <person name="Nakazaki N."/>
            <person name="Naruo K."/>
            <person name="Okumura S."/>
            <person name="Shinpo S."/>
            <person name="Takeuchi C."/>
            <person name="Wada T."/>
            <person name="Watanabe A."/>
            <person name="Yamada M."/>
            <person name="Yasuda M."/>
            <person name="Sato S."/>
            <person name="de la Bastide M."/>
            <person name="Huang E."/>
            <person name="Spiegel L."/>
            <person name="Gnoj L."/>
            <person name="O'Shaughnessy A."/>
            <person name="Preston R."/>
            <person name="Habermann K."/>
            <person name="Murray J."/>
            <person name="Johnson D."/>
            <person name="Rohlfing T."/>
            <person name="Nelson J."/>
            <person name="Stoneking T."/>
            <person name="Pepin K."/>
            <person name="Spieth J."/>
            <person name="Sekhon M."/>
            <person name="Armstrong J."/>
            <person name="Becker M."/>
            <person name="Belter E."/>
            <person name="Cordum H."/>
            <person name="Cordes M."/>
            <person name="Courtney L."/>
            <person name="Courtney W."/>
            <person name="Dante M."/>
            <person name="Du H."/>
            <person name="Edwards J."/>
            <person name="Fryman J."/>
            <person name="Haakensen B."/>
            <person name="Lamar E."/>
            <person name="Latreille P."/>
            <person name="Leonard S."/>
            <person name="Meyer R."/>
            <person name="Mulvaney E."/>
            <person name="Ozersky P."/>
            <person name="Riley A."/>
            <person name="Strowmatt C."/>
            <person name="Wagner-McPherson C."/>
            <person name="Wollam A."/>
            <person name="Yoakum M."/>
            <person name="Bell M."/>
            <person name="Dedhia N."/>
            <person name="Parnell L."/>
            <person name="Shah R."/>
            <person name="Rodriguez M."/>
            <person name="Hoon See L."/>
            <person name="Vil D."/>
            <person name="Baker J."/>
            <person name="Kirchoff K."/>
            <person name="Toth K."/>
            <person name="King L."/>
            <person name="Bahret A."/>
            <person name="Miller B."/>
            <person name="Marra M.A."/>
            <person name="Martienssen R."/>
            <person name="McCombie W.R."/>
            <person name="Wilson R.K."/>
            <person name="Murphy G."/>
            <person name="Bancroft I."/>
            <person name="Volckaert G."/>
            <person name="Wambutt R."/>
            <person name="Duesterhoeft A."/>
            <person name="Stiekema W."/>
            <person name="Pohl T."/>
            <person name="Entian K.-D."/>
            <person name="Terryn N."/>
            <person name="Hartley N."/>
            <person name="Bent E."/>
            <person name="Johnson S."/>
            <person name="Langham S.-A."/>
            <person name="McCullagh B."/>
            <person name="Robben J."/>
            <person name="Grymonprez B."/>
            <person name="Zimmermann W."/>
            <person name="Ramsperger U."/>
            <person name="Wedler H."/>
            <person name="Balke K."/>
            <person name="Wedler E."/>
            <person name="Peters S."/>
            <person name="van Staveren M."/>
            <person name="Dirkse W."/>
            <person name="Mooijman P."/>
            <person name="Klein Lankhorst R."/>
            <person name="Weitzenegger T."/>
            <person name="Bothe G."/>
            <person name="Rose M."/>
            <person name="Hauf J."/>
            <person name="Berneiser S."/>
            <person name="Hempel S."/>
            <person name="Feldpausch M."/>
            <person name="Lamberth S."/>
            <person name="Villarroel R."/>
            <person name="Gielen J."/>
            <person name="Ardiles W."/>
            <person name="Bents O."/>
            <person name="Lemcke K."/>
            <person name="Kolesov G."/>
            <person name="Mayer K.F.X."/>
            <person name="Rudd S."/>
            <person name="Schoof H."/>
            <person name="Schueller C."/>
            <person name="Zaccaria P."/>
            <person name="Mewes H.-W."/>
            <person name="Bevan M."/>
            <person name="Fransz P.F."/>
        </authorList>
    </citation>
    <scope>NUCLEOTIDE SEQUENCE [LARGE SCALE GENOMIC DNA]</scope>
    <source>
        <strain>cv. Columbia</strain>
    </source>
</reference>
<reference key="2">
    <citation type="journal article" date="2017" name="Plant J.">
        <title>Araport11: a complete reannotation of the Arabidopsis thaliana reference genome.</title>
        <authorList>
            <person name="Cheng C.Y."/>
            <person name="Krishnakumar V."/>
            <person name="Chan A.P."/>
            <person name="Thibaud-Nissen F."/>
            <person name="Schobel S."/>
            <person name="Town C.D."/>
        </authorList>
    </citation>
    <scope>GENOME REANNOTATION</scope>
    <source>
        <strain>cv. Columbia</strain>
    </source>
</reference>
<reference key="3">
    <citation type="submission" date="2003-05" db="EMBL/GenBank/DDBJ databases">
        <title>Arabidopsis full length cDNA clones.</title>
        <authorList>
            <person name="Yamada K."/>
            <person name="Dale J.M."/>
            <person name="Hsuan V.W."/>
            <person name="Onodera C.S."/>
            <person name="Quach H."/>
            <person name="Toriumi M."/>
            <person name="Wong C."/>
            <person name="Wu H.C."/>
            <person name="Yu G."/>
            <person name="Yuan S."/>
            <person name="Carninci P."/>
            <person name="Chen H."/>
            <person name="Cheuk R."/>
            <person name="Hayashizaki Y."/>
            <person name="Ishida J."/>
            <person name="Jones T."/>
            <person name="Kamiya A."/>
            <person name="Kawai J."/>
            <person name="Kim C.J."/>
            <person name="Narusaka M."/>
            <person name="Nguyen M."/>
            <person name="Palm C.J."/>
            <person name="Sakurai T."/>
            <person name="Satou M."/>
            <person name="Seki M."/>
            <person name="Shinn P."/>
            <person name="Southwick A."/>
            <person name="Tripp M.G."/>
            <person name="Wu T."/>
            <person name="Shinozaki K."/>
            <person name="Davis R.W."/>
            <person name="Ecker J.R."/>
            <person name="Theologis A."/>
        </authorList>
    </citation>
    <scope>NUCLEOTIDE SEQUENCE [LARGE SCALE MRNA]</scope>
</reference>
<reference key="4">
    <citation type="journal article" date="2007" name="Mol. Cell">
        <title>Purification of a plant mediator from Arabidopsis thaliana identifies PFT1 as the Med25 subunit.</title>
        <authorList>
            <person name="Baeckstroem S."/>
            <person name="Elfving N."/>
            <person name="Nilsson R."/>
            <person name="Wingsle G."/>
            <person name="Bjoerklund S."/>
        </authorList>
    </citation>
    <scope>IDENTIFICATION BY MASS SPECTROMETRY</scope>
    <scope>IDENTIFICATION IN THE MEDIATOR COMPLEX</scope>
    <scope>NOMENCLATURE</scope>
</reference>
<reference key="5">
    <citation type="journal article" date="2011" name="Plant Physiol.">
        <title>The Mediator complex in plants: structure, phylogeny, and expression profiling of representative genes in a dicot (Arabidopsis) and a monocot (rice) during reproduction and abiotic stress.</title>
        <authorList>
            <person name="Mathur S."/>
            <person name="Vyas S."/>
            <person name="Kapoor S."/>
            <person name="Tyagi A.K."/>
        </authorList>
    </citation>
    <scope>IDENTIFICATION</scope>
    <scope>IDENTIFICATION IN THE MEDIATOR COMPLEX</scope>
    <scope>NOMENCLATURE</scope>
</reference>
<reference key="6">
    <citation type="journal article" date="2009" name="Plant Physiol.">
        <title>Large-scale Arabidopsis phosphoproteome profiling reveals novel chloroplast kinase substrates and phosphorylation networks.</title>
        <authorList>
            <person name="Reiland S."/>
            <person name="Messerli G."/>
            <person name="Baerenfaller K."/>
            <person name="Gerrits B."/>
            <person name="Endler A."/>
            <person name="Grossmann J."/>
            <person name="Gruissem W."/>
            <person name="Baginsky S."/>
        </authorList>
    </citation>
    <scope>IDENTIFICATION BY MASS SPECTROMETRY [LARGE SCALE ANALYSIS]</scope>
</reference>
<accession>Q9LZ00</accession>
<accession>Q7Y210</accession>
<gene>
    <name type="primary">MED4</name>
    <name type="synonym">MED4_1</name>
    <name type="ordered locus">At5g02850</name>
    <name type="ORF">F9G14.160</name>
</gene>